<protein>
    <recommendedName>
        <fullName evidence="1">Threonylcarbamoyl-AMP synthase</fullName>
        <shortName evidence="1">TC-AMP synthase</shortName>
        <ecNumber evidence="1">2.7.7.87</ecNumber>
    </recommendedName>
    <alternativeName>
        <fullName evidence="1">L-threonylcarbamoyladenylate synthase</fullName>
    </alternativeName>
    <alternativeName>
        <fullName evidence="1">t(6)A37 threonylcarbamoyladenosine biosynthesis protein TsaC</fullName>
    </alternativeName>
    <alternativeName>
        <fullName evidence="1">tRNA threonylcarbamoyladenosine biosynthesis protein TsaC</fullName>
    </alternativeName>
</protein>
<feature type="chain" id="PRO_0000202021" description="Threonylcarbamoyl-AMP synthase">
    <location>
        <begin position="1"/>
        <end position="175"/>
    </location>
</feature>
<feature type="domain" description="YrdC-like" evidence="1">
    <location>
        <begin position="1"/>
        <end position="175"/>
    </location>
</feature>
<dbReference type="EC" id="2.7.7.87" evidence="1"/>
<dbReference type="EMBL" id="BA000003">
    <property type="protein sequence ID" value="BAB13187.1"/>
    <property type="molecule type" value="Genomic_DNA"/>
</dbReference>
<dbReference type="RefSeq" id="NP_240301.1">
    <property type="nucleotide sequence ID" value="NC_002528.1"/>
</dbReference>
<dbReference type="RefSeq" id="WP_010896142.1">
    <property type="nucleotide sequence ID" value="NZ_AP036055.1"/>
</dbReference>
<dbReference type="SMR" id="P57561"/>
<dbReference type="STRING" id="563178.BUAP5A_487"/>
<dbReference type="EnsemblBacteria" id="BAB13187">
    <property type="protein sequence ID" value="BAB13187"/>
    <property type="gene ID" value="BAB13187"/>
</dbReference>
<dbReference type="KEGG" id="buc:BU494"/>
<dbReference type="PATRIC" id="fig|107806.10.peg.499"/>
<dbReference type="eggNOG" id="COG0009">
    <property type="taxonomic scope" value="Bacteria"/>
</dbReference>
<dbReference type="HOGENOM" id="CLU_031397_6_0_6"/>
<dbReference type="Proteomes" id="UP000001806">
    <property type="component" value="Chromosome"/>
</dbReference>
<dbReference type="GO" id="GO:0005737">
    <property type="term" value="C:cytoplasm"/>
    <property type="evidence" value="ECO:0007669"/>
    <property type="project" value="UniProtKB-SubCell"/>
</dbReference>
<dbReference type="GO" id="GO:0005524">
    <property type="term" value="F:ATP binding"/>
    <property type="evidence" value="ECO:0007669"/>
    <property type="project" value="UniProtKB-UniRule"/>
</dbReference>
<dbReference type="GO" id="GO:0003725">
    <property type="term" value="F:double-stranded RNA binding"/>
    <property type="evidence" value="ECO:0007669"/>
    <property type="project" value="InterPro"/>
</dbReference>
<dbReference type="GO" id="GO:0061710">
    <property type="term" value="F:L-threonylcarbamoyladenylate synthase"/>
    <property type="evidence" value="ECO:0007669"/>
    <property type="project" value="UniProtKB-EC"/>
</dbReference>
<dbReference type="GO" id="GO:0000049">
    <property type="term" value="F:tRNA binding"/>
    <property type="evidence" value="ECO:0007669"/>
    <property type="project" value="TreeGrafter"/>
</dbReference>
<dbReference type="GO" id="GO:0006450">
    <property type="term" value="P:regulation of translational fidelity"/>
    <property type="evidence" value="ECO:0007669"/>
    <property type="project" value="TreeGrafter"/>
</dbReference>
<dbReference type="GO" id="GO:0002949">
    <property type="term" value="P:tRNA threonylcarbamoyladenosine modification"/>
    <property type="evidence" value="ECO:0007669"/>
    <property type="project" value="UniProtKB-UniRule"/>
</dbReference>
<dbReference type="FunFam" id="3.90.870.10:FF:000004">
    <property type="entry name" value="Threonylcarbamoyl-AMP synthase"/>
    <property type="match status" value="1"/>
</dbReference>
<dbReference type="Gene3D" id="3.90.870.10">
    <property type="entry name" value="DHBP synthase"/>
    <property type="match status" value="1"/>
</dbReference>
<dbReference type="HAMAP" id="MF_01852">
    <property type="entry name" value="TsaC"/>
    <property type="match status" value="1"/>
</dbReference>
<dbReference type="InterPro" id="IPR017945">
    <property type="entry name" value="DHBP_synth_RibB-like_a/b_dom"/>
</dbReference>
<dbReference type="InterPro" id="IPR006070">
    <property type="entry name" value="Sua5-like_dom"/>
</dbReference>
<dbReference type="InterPro" id="IPR023535">
    <property type="entry name" value="TC-AMP_synthase"/>
</dbReference>
<dbReference type="InterPro" id="IPR050156">
    <property type="entry name" value="TC-AMP_synthase_SUA5"/>
</dbReference>
<dbReference type="PANTHER" id="PTHR17490">
    <property type="entry name" value="SUA5"/>
    <property type="match status" value="1"/>
</dbReference>
<dbReference type="PANTHER" id="PTHR17490:SF18">
    <property type="entry name" value="THREONYLCARBAMOYL-AMP SYNTHASE"/>
    <property type="match status" value="1"/>
</dbReference>
<dbReference type="Pfam" id="PF01300">
    <property type="entry name" value="Sua5_yciO_yrdC"/>
    <property type="match status" value="1"/>
</dbReference>
<dbReference type="SUPFAM" id="SSF55821">
    <property type="entry name" value="YrdC/RibB"/>
    <property type="match status" value="1"/>
</dbReference>
<dbReference type="PROSITE" id="PS51163">
    <property type="entry name" value="YRDC"/>
    <property type="match status" value="1"/>
</dbReference>
<sequence length="175" mass="19689">MLHNDDVIAYPTESMFGLGCDPNSKKAVKKLLNLKNRSIEKGLILVASDFDQIKMYVNENILSNKQKKKIFFHWPGPFTFLLPAKPNTPYWLTGKFNTVAVRVSAHFEIIKLCNAFGQAVVSTSANISNMTPCFTSEEVFKCFGKDFPLLNGKIGNEKNPSKIINIINGKLIRYV</sequence>
<reference key="1">
    <citation type="journal article" date="2000" name="Nature">
        <title>Genome sequence of the endocellular bacterial symbiont of aphids Buchnera sp. APS.</title>
        <authorList>
            <person name="Shigenobu S."/>
            <person name="Watanabe H."/>
            <person name="Hattori M."/>
            <person name="Sakaki Y."/>
            <person name="Ishikawa H."/>
        </authorList>
    </citation>
    <scope>NUCLEOTIDE SEQUENCE [LARGE SCALE GENOMIC DNA]</scope>
    <source>
        <strain>APS</strain>
    </source>
</reference>
<evidence type="ECO:0000255" key="1">
    <source>
        <dbReference type="HAMAP-Rule" id="MF_01852"/>
    </source>
</evidence>
<gene>
    <name evidence="1" type="primary">tsaC</name>
    <name type="synonym">rimN</name>
    <name type="ordered locus">BU494</name>
</gene>
<organism>
    <name type="scientific">Buchnera aphidicola subsp. Acyrthosiphon pisum (strain APS)</name>
    <name type="common">Acyrthosiphon pisum symbiotic bacterium</name>
    <dbReference type="NCBI Taxonomy" id="107806"/>
    <lineage>
        <taxon>Bacteria</taxon>
        <taxon>Pseudomonadati</taxon>
        <taxon>Pseudomonadota</taxon>
        <taxon>Gammaproteobacteria</taxon>
        <taxon>Enterobacterales</taxon>
        <taxon>Erwiniaceae</taxon>
        <taxon>Buchnera</taxon>
    </lineage>
</organism>
<keyword id="KW-0067">ATP-binding</keyword>
<keyword id="KW-0963">Cytoplasm</keyword>
<keyword id="KW-0547">Nucleotide-binding</keyword>
<keyword id="KW-0548">Nucleotidyltransferase</keyword>
<keyword id="KW-1185">Reference proteome</keyword>
<keyword id="KW-0808">Transferase</keyword>
<keyword id="KW-0819">tRNA processing</keyword>
<name>TSAC_BUCAI</name>
<accession>P57561</accession>
<comment type="function">
    <text evidence="1">Required for the formation of a threonylcarbamoyl group on adenosine at position 37 (t(6)A37) in tRNAs that read codons beginning with adenine. Catalyzes the conversion of L-threonine, HCO(3)(-)/CO(2) and ATP to give threonylcarbamoyl-AMP (TC-AMP) as the acyladenylate intermediate, with the release of diphosphate.</text>
</comment>
<comment type="catalytic activity">
    <reaction evidence="1">
        <text>L-threonine + hydrogencarbonate + ATP = L-threonylcarbamoyladenylate + diphosphate + H2O</text>
        <dbReference type="Rhea" id="RHEA:36407"/>
        <dbReference type="ChEBI" id="CHEBI:15377"/>
        <dbReference type="ChEBI" id="CHEBI:17544"/>
        <dbReference type="ChEBI" id="CHEBI:30616"/>
        <dbReference type="ChEBI" id="CHEBI:33019"/>
        <dbReference type="ChEBI" id="CHEBI:57926"/>
        <dbReference type="ChEBI" id="CHEBI:73682"/>
        <dbReference type="EC" id="2.7.7.87"/>
    </reaction>
</comment>
<comment type="subcellular location">
    <subcellularLocation>
        <location evidence="1">Cytoplasm</location>
    </subcellularLocation>
</comment>
<comment type="similarity">
    <text evidence="1">Belongs to the SUA5 family. TsaC subfamily.</text>
</comment>
<proteinExistence type="inferred from homology"/>